<evidence type="ECO:0000255" key="1">
    <source>
        <dbReference type="HAMAP-Rule" id="MF_00056"/>
    </source>
</evidence>
<protein>
    <recommendedName>
        <fullName evidence="1">2-dehydro-3-deoxyphosphooctonate aldolase</fullName>
        <ecNumber evidence="1">2.5.1.55</ecNumber>
    </recommendedName>
    <alternativeName>
        <fullName evidence="1">3-deoxy-D-manno-octulosonic acid 8-phosphate synthase</fullName>
    </alternativeName>
    <alternativeName>
        <fullName evidence="1">KDO-8-phosphate synthase</fullName>
        <shortName evidence="1">KDO 8-P synthase</shortName>
        <shortName evidence="1">KDOPS</shortName>
    </alternativeName>
    <alternativeName>
        <fullName evidence="1">Phospho-2-dehydro-3-deoxyoctonate aldolase</fullName>
    </alternativeName>
</protein>
<gene>
    <name evidence="1" type="primary">kdsA</name>
    <name type="ordered locus">VS_0756</name>
</gene>
<feature type="chain" id="PRO_1000117793" description="2-dehydro-3-deoxyphosphooctonate aldolase">
    <location>
        <begin position="1"/>
        <end position="284"/>
    </location>
</feature>
<accession>B7VKH7</accession>
<comment type="catalytic activity">
    <reaction evidence="1">
        <text>D-arabinose 5-phosphate + phosphoenolpyruvate + H2O = 3-deoxy-alpha-D-manno-2-octulosonate-8-phosphate + phosphate</text>
        <dbReference type="Rhea" id="RHEA:14053"/>
        <dbReference type="ChEBI" id="CHEBI:15377"/>
        <dbReference type="ChEBI" id="CHEBI:43474"/>
        <dbReference type="ChEBI" id="CHEBI:57693"/>
        <dbReference type="ChEBI" id="CHEBI:58702"/>
        <dbReference type="ChEBI" id="CHEBI:85985"/>
        <dbReference type="EC" id="2.5.1.55"/>
    </reaction>
</comment>
<comment type="pathway">
    <text evidence="1">Carbohydrate biosynthesis; 3-deoxy-D-manno-octulosonate biosynthesis; 3-deoxy-D-manno-octulosonate from D-ribulose 5-phosphate: step 2/3.</text>
</comment>
<comment type="pathway">
    <text evidence="1">Bacterial outer membrane biogenesis; lipopolysaccharide biosynthesis.</text>
</comment>
<comment type="subcellular location">
    <subcellularLocation>
        <location evidence="1">Cytoplasm</location>
    </subcellularLocation>
</comment>
<comment type="similarity">
    <text evidence="1">Belongs to the KdsA family.</text>
</comment>
<proteinExistence type="inferred from homology"/>
<sequence length="284" mass="31066">MMEQKTVHIGNMPIANDKPFTLFAGMNVLESRDLAMQICEHYVKVTEKLGIPYVFKASFDKANRSSVHSYRGPGMEEGLKIFQELKDTFGVKIITDIHTEAQAQPVADVVDVIQLPAFLARQTDLVEAMAKTGAVINVKKPQFMSPDQVGNIVDKFAECGNENIILCERGSCMGYDNLVVDMLGFGVMKKSSNGSPIIFDVTHALQMRDPSGAASGGRREQTVELAKAGIATGIAGLFLEAHPNPDQARCDGPSALPLDKLEPFLKQMKALDDLIKGFEHIEIK</sequence>
<keyword id="KW-0963">Cytoplasm</keyword>
<keyword id="KW-0448">Lipopolysaccharide biosynthesis</keyword>
<keyword id="KW-0808">Transferase</keyword>
<dbReference type="EC" id="2.5.1.55" evidence="1"/>
<dbReference type="EMBL" id="FM954972">
    <property type="protein sequence ID" value="CAV17734.1"/>
    <property type="molecule type" value="Genomic_DNA"/>
</dbReference>
<dbReference type="SMR" id="B7VKH7"/>
<dbReference type="STRING" id="575788.VS_0756"/>
<dbReference type="KEGG" id="vsp:VS_0756"/>
<dbReference type="eggNOG" id="COG2877">
    <property type="taxonomic scope" value="Bacteria"/>
</dbReference>
<dbReference type="HOGENOM" id="CLU_036666_0_0_6"/>
<dbReference type="UniPathway" id="UPA00030"/>
<dbReference type="UniPathway" id="UPA00357">
    <property type="reaction ID" value="UER00474"/>
</dbReference>
<dbReference type="Proteomes" id="UP000009100">
    <property type="component" value="Chromosome 1"/>
</dbReference>
<dbReference type="GO" id="GO:0005737">
    <property type="term" value="C:cytoplasm"/>
    <property type="evidence" value="ECO:0007669"/>
    <property type="project" value="UniProtKB-SubCell"/>
</dbReference>
<dbReference type="GO" id="GO:0008676">
    <property type="term" value="F:3-deoxy-8-phosphooctulonate synthase activity"/>
    <property type="evidence" value="ECO:0007669"/>
    <property type="project" value="UniProtKB-UniRule"/>
</dbReference>
<dbReference type="GO" id="GO:0019294">
    <property type="term" value="P:keto-3-deoxy-D-manno-octulosonic acid biosynthetic process"/>
    <property type="evidence" value="ECO:0007669"/>
    <property type="project" value="UniProtKB-UniRule"/>
</dbReference>
<dbReference type="FunFam" id="3.20.20.70:FF:000058">
    <property type="entry name" value="2-dehydro-3-deoxyphosphooctonate aldolase"/>
    <property type="match status" value="1"/>
</dbReference>
<dbReference type="Gene3D" id="3.20.20.70">
    <property type="entry name" value="Aldolase class I"/>
    <property type="match status" value="1"/>
</dbReference>
<dbReference type="HAMAP" id="MF_00056">
    <property type="entry name" value="KDO8P_synth"/>
    <property type="match status" value="1"/>
</dbReference>
<dbReference type="InterPro" id="IPR013785">
    <property type="entry name" value="Aldolase_TIM"/>
</dbReference>
<dbReference type="InterPro" id="IPR006218">
    <property type="entry name" value="DAHP1/KDSA"/>
</dbReference>
<dbReference type="InterPro" id="IPR006269">
    <property type="entry name" value="KDO8P_synthase"/>
</dbReference>
<dbReference type="NCBIfam" id="TIGR01362">
    <property type="entry name" value="KDO8P_synth"/>
    <property type="match status" value="1"/>
</dbReference>
<dbReference type="NCBIfam" id="NF003543">
    <property type="entry name" value="PRK05198.1"/>
    <property type="match status" value="1"/>
</dbReference>
<dbReference type="NCBIfam" id="NF009109">
    <property type="entry name" value="PRK12457.1"/>
    <property type="match status" value="1"/>
</dbReference>
<dbReference type="PANTHER" id="PTHR21057">
    <property type="entry name" value="PHOSPHO-2-DEHYDRO-3-DEOXYHEPTONATE ALDOLASE"/>
    <property type="match status" value="1"/>
</dbReference>
<dbReference type="Pfam" id="PF00793">
    <property type="entry name" value="DAHP_synth_1"/>
    <property type="match status" value="1"/>
</dbReference>
<dbReference type="SUPFAM" id="SSF51569">
    <property type="entry name" value="Aldolase"/>
    <property type="match status" value="1"/>
</dbReference>
<name>KDSA_VIBA3</name>
<reference key="1">
    <citation type="submission" date="2009-02" db="EMBL/GenBank/DDBJ databases">
        <title>Vibrio splendidus str. LGP32 complete genome.</title>
        <authorList>
            <person name="Mazel D."/>
            <person name="Le Roux F."/>
        </authorList>
    </citation>
    <scope>NUCLEOTIDE SEQUENCE [LARGE SCALE GENOMIC DNA]</scope>
    <source>
        <strain>LGP32</strain>
    </source>
</reference>
<organism>
    <name type="scientific">Vibrio atlanticus (strain LGP32)</name>
    <name type="common">Vibrio splendidus (strain Mel32)</name>
    <dbReference type="NCBI Taxonomy" id="575788"/>
    <lineage>
        <taxon>Bacteria</taxon>
        <taxon>Pseudomonadati</taxon>
        <taxon>Pseudomonadota</taxon>
        <taxon>Gammaproteobacteria</taxon>
        <taxon>Vibrionales</taxon>
        <taxon>Vibrionaceae</taxon>
        <taxon>Vibrio</taxon>
    </lineage>
</organism>